<dbReference type="EMBL" id="X85331">
    <property type="protein sequence ID" value="CAA59680.1"/>
    <property type="status" value="ALT_FRAME"/>
    <property type="molecule type" value="mRNA"/>
</dbReference>
<dbReference type="EMBL" id="U33319">
    <property type="protein sequence ID" value="AAC47329.1"/>
    <property type="molecule type" value="mRNA"/>
</dbReference>
<dbReference type="EMBL" id="AF009038">
    <property type="protein sequence ID" value="AAB62975.1"/>
    <property type="molecule type" value="mRNA"/>
</dbReference>
<dbReference type="EMBL" id="AE014297">
    <property type="protein sequence ID" value="AAF56902.2"/>
    <property type="molecule type" value="Genomic_DNA"/>
</dbReference>
<dbReference type="EMBL" id="AY069324">
    <property type="protein sequence ID" value="AAL39469.1"/>
    <property type="molecule type" value="mRNA"/>
</dbReference>
<dbReference type="EMBL" id="M38582">
    <property type="protein sequence ID" value="AAA28611.1"/>
    <property type="molecule type" value="Genomic_DNA"/>
</dbReference>
<dbReference type="PIR" id="PS0404">
    <property type="entry name" value="PS0404"/>
</dbReference>
<dbReference type="PIR" id="S55392">
    <property type="entry name" value="S55392"/>
</dbReference>
<dbReference type="RefSeq" id="NP_477324.1">
    <property type="nucleotide sequence ID" value="NM_057976.3"/>
</dbReference>
<dbReference type="SMR" id="Q03372"/>
<dbReference type="BioGRID" id="69563">
    <property type="interactions" value="21"/>
</dbReference>
<dbReference type="FunCoup" id="Q03372">
    <property type="interactions" value="140"/>
</dbReference>
<dbReference type="IntAct" id="Q03372">
    <property type="interactions" value="15"/>
</dbReference>
<dbReference type="STRING" id="7227.FBpp0084807"/>
<dbReference type="GlyGen" id="Q03372">
    <property type="glycosylation" value="2 sites"/>
</dbReference>
<dbReference type="iPTMnet" id="Q03372"/>
<dbReference type="PaxDb" id="7227-FBpp0084807"/>
<dbReference type="DNASU" id="45285"/>
<dbReference type="EnsemblMetazoa" id="FBtr0085441">
    <property type="protein sequence ID" value="FBpp0084807"/>
    <property type="gene ID" value="FBgn0000492"/>
</dbReference>
<dbReference type="GeneID" id="45285"/>
<dbReference type="KEGG" id="dme:Dmel_CG1897"/>
<dbReference type="AGR" id="FB:FBgn0000492"/>
<dbReference type="CTD" id="45285"/>
<dbReference type="FlyBase" id="FBgn0000492">
    <property type="gene designation" value="Dr"/>
</dbReference>
<dbReference type="VEuPathDB" id="VectorBase:FBgn0000492"/>
<dbReference type="eggNOG" id="KOG0492">
    <property type="taxonomic scope" value="Eukaryota"/>
</dbReference>
<dbReference type="GeneTree" id="ENSGT00940000169520"/>
<dbReference type="HOGENOM" id="CLU_041724_0_0_1"/>
<dbReference type="InParanoid" id="Q03372"/>
<dbReference type="OMA" id="PAKNERH"/>
<dbReference type="OrthoDB" id="6159439at2759"/>
<dbReference type="PhylomeDB" id="Q03372"/>
<dbReference type="BioGRID-ORCS" id="45285">
    <property type="hits" value="0 hits in 3 CRISPR screens"/>
</dbReference>
<dbReference type="GenomeRNAi" id="45285"/>
<dbReference type="PRO" id="PR:Q03372"/>
<dbReference type="Proteomes" id="UP000000803">
    <property type="component" value="Chromosome 3R"/>
</dbReference>
<dbReference type="Bgee" id="FBgn0000492">
    <property type="expression patterns" value="Expressed in wing disc and 99 other cell types or tissues"/>
</dbReference>
<dbReference type="GO" id="GO:0005634">
    <property type="term" value="C:nucleus"/>
    <property type="evidence" value="ECO:0000314"/>
    <property type="project" value="FlyBase"/>
</dbReference>
<dbReference type="GO" id="GO:0000981">
    <property type="term" value="F:DNA-binding transcription factor activity, RNA polymerase II-specific"/>
    <property type="evidence" value="ECO:0000318"/>
    <property type="project" value="GO_Central"/>
</dbReference>
<dbReference type="GO" id="GO:0000977">
    <property type="term" value="F:RNA polymerase II transcription regulatory region sequence-specific DNA binding"/>
    <property type="evidence" value="ECO:0000318"/>
    <property type="project" value="GO_Central"/>
</dbReference>
<dbReference type="GO" id="GO:0043565">
    <property type="term" value="F:sequence-specific DNA binding"/>
    <property type="evidence" value="ECO:0000250"/>
    <property type="project" value="FlyBase"/>
</dbReference>
<dbReference type="GO" id="GO:0007420">
    <property type="term" value="P:brain development"/>
    <property type="evidence" value="ECO:0000315"/>
    <property type="project" value="FlyBase"/>
</dbReference>
<dbReference type="GO" id="GO:0007417">
    <property type="term" value="P:central nervous system development"/>
    <property type="evidence" value="ECO:0000303"/>
    <property type="project" value="FlyBase"/>
</dbReference>
<dbReference type="GO" id="GO:0009953">
    <property type="term" value="P:dorsal/ventral pattern formation"/>
    <property type="evidence" value="ECO:0000304"/>
    <property type="project" value="FlyBase"/>
</dbReference>
<dbReference type="GO" id="GO:0007450">
    <property type="term" value="P:dorsal/ventral pattern formation, imaginal disc"/>
    <property type="evidence" value="ECO:0000315"/>
    <property type="project" value="FlyBase"/>
</dbReference>
<dbReference type="GO" id="GO:0007398">
    <property type="term" value="P:ectoderm development"/>
    <property type="evidence" value="ECO:0000304"/>
    <property type="project" value="FlyBase"/>
</dbReference>
<dbReference type="GO" id="GO:0048598">
    <property type="term" value="P:embryonic morphogenesis"/>
    <property type="evidence" value="ECO:0000318"/>
    <property type="project" value="GO_Central"/>
</dbReference>
<dbReference type="GO" id="GO:0021782">
    <property type="term" value="P:glial cell development"/>
    <property type="evidence" value="ECO:0000315"/>
    <property type="project" value="FlyBase"/>
</dbReference>
<dbReference type="GO" id="GO:0007485">
    <property type="term" value="P:imaginal disc-derived male genitalia development"/>
    <property type="evidence" value="ECO:0000315"/>
    <property type="project" value="FlyBase"/>
</dbReference>
<dbReference type="GO" id="GO:0007476">
    <property type="term" value="P:imaginal disc-derived wing morphogenesis"/>
    <property type="evidence" value="ECO:0000315"/>
    <property type="project" value="FlyBase"/>
</dbReference>
<dbReference type="GO" id="GO:0007517">
    <property type="term" value="P:muscle organ development"/>
    <property type="evidence" value="ECO:0000304"/>
    <property type="project" value="FlyBase"/>
</dbReference>
<dbReference type="GO" id="GO:0010629">
    <property type="term" value="P:negative regulation of gene expression"/>
    <property type="evidence" value="ECO:0000315"/>
    <property type="project" value="FlyBase"/>
</dbReference>
<dbReference type="GO" id="GO:0007400">
    <property type="term" value="P:neuroblast fate determination"/>
    <property type="evidence" value="ECO:0000304"/>
    <property type="project" value="FlyBase"/>
</dbReference>
<dbReference type="GO" id="GO:0007389">
    <property type="term" value="P:pattern specification process"/>
    <property type="evidence" value="ECO:0000303"/>
    <property type="project" value="FlyBase"/>
</dbReference>
<dbReference type="GO" id="GO:0042659">
    <property type="term" value="P:regulation of cell fate specification"/>
    <property type="evidence" value="ECO:0000315"/>
    <property type="project" value="FlyBase"/>
</dbReference>
<dbReference type="GO" id="GO:0006357">
    <property type="term" value="P:regulation of transcription by RNA polymerase II"/>
    <property type="evidence" value="ECO:0000318"/>
    <property type="project" value="GO_Central"/>
</dbReference>
<dbReference type="GO" id="GO:0007419">
    <property type="term" value="P:ventral cord development"/>
    <property type="evidence" value="ECO:0000304"/>
    <property type="project" value="FlyBase"/>
</dbReference>
<dbReference type="GO" id="GO:0035309">
    <property type="term" value="P:wing and notum subfield formation"/>
    <property type="evidence" value="ECO:0000315"/>
    <property type="project" value="FlyBase"/>
</dbReference>
<dbReference type="GO" id="GO:0035222">
    <property type="term" value="P:wing disc pattern formation"/>
    <property type="evidence" value="ECO:0000315"/>
    <property type="project" value="FlyBase"/>
</dbReference>
<dbReference type="CDD" id="cd00086">
    <property type="entry name" value="homeodomain"/>
    <property type="match status" value="1"/>
</dbReference>
<dbReference type="FunFam" id="1.10.10.60:FF:000306">
    <property type="entry name" value="Muscle segmentation homeobox"/>
    <property type="match status" value="1"/>
</dbReference>
<dbReference type="Gene3D" id="1.10.10.60">
    <property type="entry name" value="Homeodomain-like"/>
    <property type="match status" value="1"/>
</dbReference>
<dbReference type="InterPro" id="IPR001356">
    <property type="entry name" value="HD"/>
</dbReference>
<dbReference type="InterPro" id="IPR020479">
    <property type="entry name" value="HD_metazoa"/>
</dbReference>
<dbReference type="InterPro" id="IPR017970">
    <property type="entry name" value="Homeobox_CS"/>
</dbReference>
<dbReference type="InterPro" id="IPR009057">
    <property type="entry name" value="Homeodomain-like_sf"/>
</dbReference>
<dbReference type="InterPro" id="IPR050674">
    <property type="entry name" value="Msh_Homeobox_Regulators"/>
</dbReference>
<dbReference type="PANTHER" id="PTHR24338">
    <property type="entry name" value="HOMEOBOX PROTEIN MSX"/>
    <property type="match status" value="1"/>
</dbReference>
<dbReference type="PANTHER" id="PTHR24338:SF0">
    <property type="entry name" value="MUSCLE SEGMENTATION HOMEOBOX"/>
    <property type="match status" value="1"/>
</dbReference>
<dbReference type="Pfam" id="PF00046">
    <property type="entry name" value="Homeodomain"/>
    <property type="match status" value="1"/>
</dbReference>
<dbReference type="PRINTS" id="PR00024">
    <property type="entry name" value="HOMEOBOX"/>
</dbReference>
<dbReference type="SMART" id="SM00389">
    <property type="entry name" value="HOX"/>
    <property type="match status" value="1"/>
</dbReference>
<dbReference type="SUPFAM" id="SSF46689">
    <property type="entry name" value="Homeodomain-like"/>
    <property type="match status" value="1"/>
</dbReference>
<dbReference type="PROSITE" id="PS00027">
    <property type="entry name" value="HOMEOBOX_1"/>
    <property type="match status" value="1"/>
</dbReference>
<dbReference type="PROSITE" id="PS50071">
    <property type="entry name" value="HOMEOBOX_2"/>
    <property type="match status" value="1"/>
</dbReference>
<gene>
    <name type="primary">Dr</name>
    <name type="synonym">msh</name>
    <name type="ORF">CG1897</name>
</gene>
<feature type="chain" id="PRO_0000049079" description="Muscle segmentation homeobox">
    <location>
        <begin position="1"/>
        <end position="515"/>
    </location>
</feature>
<feature type="DNA-binding region" description="Homeobox" evidence="1">
    <location>
        <begin position="421"/>
        <end position="480"/>
    </location>
</feature>
<feature type="region of interest" description="Disordered" evidence="2">
    <location>
        <begin position="1"/>
        <end position="76"/>
    </location>
</feature>
<feature type="region of interest" description="Disordered" evidence="2">
    <location>
        <begin position="90"/>
        <end position="113"/>
    </location>
</feature>
<feature type="region of interest" description="Disordered" evidence="2">
    <location>
        <begin position="142"/>
        <end position="185"/>
    </location>
</feature>
<feature type="region of interest" description="Disordered" evidence="2">
    <location>
        <begin position="214"/>
        <end position="279"/>
    </location>
</feature>
<feature type="region of interest" description="Disordered" evidence="2">
    <location>
        <begin position="307"/>
        <end position="342"/>
    </location>
</feature>
<feature type="compositionally biased region" description="Polar residues" evidence="2">
    <location>
        <begin position="7"/>
        <end position="16"/>
    </location>
</feature>
<feature type="compositionally biased region" description="Low complexity" evidence="2">
    <location>
        <begin position="17"/>
        <end position="65"/>
    </location>
</feature>
<feature type="compositionally biased region" description="Low complexity" evidence="2">
    <location>
        <begin position="160"/>
        <end position="173"/>
    </location>
</feature>
<feature type="compositionally biased region" description="Low complexity" evidence="2">
    <location>
        <begin position="214"/>
        <end position="249"/>
    </location>
</feature>
<feature type="compositionally biased region" description="Polar residues" evidence="2">
    <location>
        <begin position="254"/>
        <end position="265"/>
    </location>
</feature>
<feature type="mutagenesis site" description="In Msh4-4; abnormalities in sense organ precursor (SOP) cells and their progeny. Chordotonal organs contain fewer neurons and glial cells and migration of the progeny cells derived from the SOPs in embryos are significantly desynchronized among different segments." evidence="3">
    <location>
        <begin position="68"/>
        <end position="515"/>
    </location>
</feature>
<feature type="sequence conflict" description="In Ref. 2 and 3." evidence="7" ref="2 3">
    <original>S</original>
    <variation>T</variation>
    <location>
        <position position="27"/>
    </location>
</feature>
<feature type="sequence conflict" description="In Ref. 1; CAA59680." evidence="7" ref="1">
    <original>G</original>
    <variation>A</variation>
    <location>
        <position position="54"/>
    </location>
</feature>
<feature type="sequence conflict" description="In Ref. 1; CAA59680." evidence="7" ref="1">
    <original>L</original>
    <variation>V</variation>
    <location>
        <position position="86"/>
    </location>
</feature>
<feature type="sequence conflict" description="In Ref. 1; CAA59680." evidence="7" ref="1">
    <original>A</original>
    <variation>V</variation>
    <location>
        <position position="153"/>
    </location>
</feature>
<feature type="sequence conflict" description="In Ref. 1; CAA59680." evidence="7" ref="1">
    <original>G</original>
    <variation>A</variation>
    <location>
        <position position="337"/>
    </location>
</feature>
<reference key="1">
    <citation type="journal article" date="1995" name="Dev. Biol.">
        <title>Normal expression and the effects of ectopic expression of the Drosophila muscle segment homeobox (msh) gene suggest a role in differentiation and patterning of embryonic muscles.</title>
        <authorList>
            <person name="Lord P.C.W."/>
            <person name="Lin M.H."/>
            <person name="Hales K.H."/>
            <person name="Storti R.V."/>
        </authorList>
    </citation>
    <scope>NUCLEOTIDE SEQUENCE [MRNA]</scope>
    <scope>TISSUE SPECIFICITY</scope>
    <scope>DEVELOPMENTAL STAGE</scope>
    <source>
        <strain>Canton-S</strain>
        <tissue>Embryo</tissue>
    </source>
</reference>
<reference key="2">
    <citation type="journal article" date="1996" name="Mech. Dev.">
        <title>msh may play a conserved role in dorsoventral patterning of the neuroectoderm and mesoderm.</title>
        <authorList>
            <person name="D'Alessio M."/>
            <person name="Frasch M."/>
        </authorList>
    </citation>
    <scope>NUCLEOTIDE SEQUENCE [MRNA]</scope>
    <scope>FUNCTION</scope>
    <scope>TISSUE SPECIFICITY</scope>
    <scope>DEVELOPMENTAL STAGE</scope>
</reference>
<reference key="3">
    <citation type="journal article" date="1998" name="Development">
        <title>Regional specification of muscle progenitors in Drosophila: the role of the msh homeobox gene.</title>
        <authorList>
            <person name="Nose A."/>
            <person name="Isshiki T."/>
            <person name="Takeichi M."/>
        </authorList>
    </citation>
    <scope>NUCLEOTIDE SEQUENCE [MRNA]</scope>
    <scope>FUNCTION</scope>
    <scope>TISSUE SPECIFICITY</scope>
    <source>
        <strain>Canton-S</strain>
    </source>
</reference>
<reference key="4">
    <citation type="journal article" date="2000" name="Science">
        <title>The genome sequence of Drosophila melanogaster.</title>
        <authorList>
            <person name="Adams M.D."/>
            <person name="Celniker S.E."/>
            <person name="Holt R.A."/>
            <person name="Evans C.A."/>
            <person name="Gocayne J.D."/>
            <person name="Amanatides P.G."/>
            <person name="Scherer S.E."/>
            <person name="Li P.W."/>
            <person name="Hoskins R.A."/>
            <person name="Galle R.F."/>
            <person name="George R.A."/>
            <person name="Lewis S.E."/>
            <person name="Richards S."/>
            <person name="Ashburner M."/>
            <person name="Henderson S.N."/>
            <person name="Sutton G.G."/>
            <person name="Wortman J.R."/>
            <person name="Yandell M.D."/>
            <person name="Zhang Q."/>
            <person name="Chen L.X."/>
            <person name="Brandon R.C."/>
            <person name="Rogers Y.-H.C."/>
            <person name="Blazej R.G."/>
            <person name="Champe M."/>
            <person name="Pfeiffer B.D."/>
            <person name="Wan K.H."/>
            <person name="Doyle C."/>
            <person name="Baxter E.G."/>
            <person name="Helt G."/>
            <person name="Nelson C.R."/>
            <person name="Miklos G.L.G."/>
            <person name="Abril J.F."/>
            <person name="Agbayani A."/>
            <person name="An H.-J."/>
            <person name="Andrews-Pfannkoch C."/>
            <person name="Baldwin D."/>
            <person name="Ballew R.M."/>
            <person name="Basu A."/>
            <person name="Baxendale J."/>
            <person name="Bayraktaroglu L."/>
            <person name="Beasley E.M."/>
            <person name="Beeson K.Y."/>
            <person name="Benos P.V."/>
            <person name="Berman B.P."/>
            <person name="Bhandari D."/>
            <person name="Bolshakov S."/>
            <person name="Borkova D."/>
            <person name="Botchan M.R."/>
            <person name="Bouck J."/>
            <person name="Brokstein P."/>
            <person name="Brottier P."/>
            <person name="Burtis K.C."/>
            <person name="Busam D.A."/>
            <person name="Butler H."/>
            <person name="Cadieu E."/>
            <person name="Center A."/>
            <person name="Chandra I."/>
            <person name="Cherry J.M."/>
            <person name="Cawley S."/>
            <person name="Dahlke C."/>
            <person name="Davenport L.B."/>
            <person name="Davies P."/>
            <person name="de Pablos B."/>
            <person name="Delcher A."/>
            <person name="Deng Z."/>
            <person name="Mays A.D."/>
            <person name="Dew I."/>
            <person name="Dietz S.M."/>
            <person name="Dodson K."/>
            <person name="Doup L.E."/>
            <person name="Downes M."/>
            <person name="Dugan-Rocha S."/>
            <person name="Dunkov B.C."/>
            <person name="Dunn P."/>
            <person name="Durbin K.J."/>
            <person name="Evangelista C.C."/>
            <person name="Ferraz C."/>
            <person name="Ferriera S."/>
            <person name="Fleischmann W."/>
            <person name="Fosler C."/>
            <person name="Gabrielian A.E."/>
            <person name="Garg N.S."/>
            <person name="Gelbart W.M."/>
            <person name="Glasser K."/>
            <person name="Glodek A."/>
            <person name="Gong F."/>
            <person name="Gorrell J.H."/>
            <person name="Gu Z."/>
            <person name="Guan P."/>
            <person name="Harris M."/>
            <person name="Harris N.L."/>
            <person name="Harvey D.A."/>
            <person name="Heiman T.J."/>
            <person name="Hernandez J.R."/>
            <person name="Houck J."/>
            <person name="Hostin D."/>
            <person name="Houston K.A."/>
            <person name="Howland T.J."/>
            <person name="Wei M.-H."/>
            <person name="Ibegwam C."/>
            <person name="Jalali M."/>
            <person name="Kalush F."/>
            <person name="Karpen G.H."/>
            <person name="Ke Z."/>
            <person name="Kennison J.A."/>
            <person name="Ketchum K.A."/>
            <person name="Kimmel B.E."/>
            <person name="Kodira C.D."/>
            <person name="Kraft C.L."/>
            <person name="Kravitz S."/>
            <person name="Kulp D."/>
            <person name="Lai Z."/>
            <person name="Lasko P."/>
            <person name="Lei Y."/>
            <person name="Levitsky A.A."/>
            <person name="Li J.H."/>
            <person name="Li Z."/>
            <person name="Liang Y."/>
            <person name="Lin X."/>
            <person name="Liu X."/>
            <person name="Mattei B."/>
            <person name="McIntosh T.C."/>
            <person name="McLeod M.P."/>
            <person name="McPherson D."/>
            <person name="Merkulov G."/>
            <person name="Milshina N.V."/>
            <person name="Mobarry C."/>
            <person name="Morris J."/>
            <person name="Moshrefi A."/>
            <person name="Mount S.M."/>
            <person name="Moy M."/>
            <person name="Murphy B."/>
            <person name="Murphy L."/>
            <person name="Muzny D.M."/>
            <person name="Nelson D.L."/>
            <person name="Nelson D.R."/>
            <person name="Nelson K.A."/>
            <person name="Nixon K."/>
            <person name="Nusskern D.R."/>
            <person name="Pacleb J.M."/>
            <person name="Palazzolo M."/>
            <person name="Pittman G.S."/>
            <person name="Pan S."/>
            <person name="Pollard J."/>
            <person name="Puri V."/>
            <person name="Reese M.G."/>
            <person name="Reinert K."/>
            <person name="Remington K."/>
            <person name="Saunders R.D.C."/>
            <person name="Scheeler F."/>
            <person name="Shen H."/>
            <person name="Shue B.C."/>
            <person name="Siden-Kiamos I."/>
            <person name="Simpson M."/>
            <person name="Skupski M.P."/>
            <person name="Smith T.J."/>
            <person name="Spier E."/>
            <person name="Spradling A.C."/>
            <person name="Stapleton M."/>
            <person name="Strong R."/>
            <person name="Sun E."/>
            <person name="Svirskas R."/>
            <person name="Tector C."/>
            <person name="Turner R."/>
            <person name="Venter E."/>
            <person name="Wang A.H."/>
            <person name="Wang X."/>
            <person name="Wang Z.-Y."/>
            <person name="Wassarman D.A."/>
            <person name="Weinstock G.M."/>
            <person name="Weissenbach J."/>
            <person name="Williams S.M."/>
            <person name="Woodage T."/>
            <person name="Worley K.C."/>
            <person name="Wu D."/>
            <person name="Yang S."/>
            <person name="Yao Q.A."/>
            <person name="Ye J."/>
            <person name="Yeh R.-F."/>
            <person name="Zaveri J.S."/>
            <person name="Zhan M."/>
            <person name="Zhang G."/>
            <person name="Zhao Q."/>
            <person name="Zheng L."/>
            <person name="Zheng X.H."/>
            <person name="Zhong F.N."/>
            <person name="Zhong W."/>
            <person name="Zhou X."/>
            <person name="Zhu S.C."/>
            <person name="Zhu X."/>
            <person name="Smith H.O."/>
            <person name="Gibbs R.A."/>
            <person name="Myers E.W."/>
            <person name="Rubin G.M."/>
            <person name="Venter J.C."/>
        </authorList>
    </citation>
    <scope>NUCLEOTIDE SEQUENCE [LARGE SCALE GENOMIC DNA]</scope>
    <source>
        <strain>Berkeley</strain>
    </source>
</reference>
<reference key="5">
    <citation type="journal article" date="2002" name="Genome Biol.">
        <title>Annotation of the Drosophila melanogaster euchromatic genome: a systematic review.</title>
        <authorList>
            <person name="Misra S."/>
            <person name="Crosby M.A."/>
            <person name="Mungall C.J."/>
            <person name="Matthews B.B."/>
            <person name="Campbell K.S."/>
            <person name="Hradecky P."/>
            <person name="Huang Y."/>
            <person name="Kaminker J.S."/>
            <person name="Millburn G.H."/>
            <person name="Prochnik S.E."/>
            <person name="Smith C.D."/>
            <person name="Tupy J.L."/>
            <person name="Whitfield E.J."/>
            <person name="Bayraktaroglu L."/>
            <person name="Berman B.P."/>
            <person name="Bettencourt B.R."/>
            <person name="Celniker S.E."/>
            <person name="de Grey A.D.N.J."/>
            <person name="Drysdale R.A."/>
            <person name="Harris N.L."/>
            <person name="Richter J."/>
            <person name="Russo S."/>
            <person name="Schroeder A.J."/>
            <person name="Shu S.Q."/>
            <person name="Stapleton M."/>
            <person name="Yamada C."/>
            <person name="Ashburner M."/>
            <person name="Gelbart W.M."/>
            <person name="Rubin G.M."/>
            <person name="Lewis S.E."/>
        </authorList>
    </citation>
    <scope>GENOME REANNOTATION</scope>
    <source>
        <strain>Berkeley</strain>
    </source>
</reference>
<reference key="6">
    <citation type="journal article" date="2002" name="Genome Biol.">
        <title>A Drosophila full-length cDNA resource.</title>
        <authorList>
            <person name="Stapleton M."/>
            <person name="Carlson J.W."/>
            <person name="Brokstein P."/>
            <person name="Yu C."/>
            <person name="Champe M."/>
            <person name="George R.A."/>
            <person name="Guarin H."/>
            <person name="Kronmiller B."/>
            <person name="Pacleb J.M."/>
            <person name="Park S."/>
            <person name="Wan K.H."/>
            <person name="Rubin G.M."/>
            <person name="Celniker S.E."/>
        </authorList>
    </citation>
    <scope>NUCLEOTIDE SEQUENCE [LARGE SCALE MRNA]</scope>
    <source>
        <strain>Berkeley</strain>
        <tissue>Embryo</tissue>
    </source>
</reference>
<reference key="7">
    <citation type="journal article" date="1991" name="Gene">
        <title>Cloning and evolutionary analysis of msh-like homeobox genes from mouse, zebrafish and ascidian.</title>
        <authorList>
            <person name="Holland P.W.H."/>
        </authorList>
    </citation>
    <scope>NUCLEOTIDE SEQUENCE [GENOMIC DNA] OF 420-480</scope>
    <source>
        <strain>Oregon-R</strain>
    </source>
</reference>
<reference key="8">
    <citation type="journal article" date="2017" name="Proc. Natl. Acad. Sci. U.S.A.">
        <title>Conserved gene regulatory module specifies lateral neural borders across bilaterians.</title>
        <authorList>
            <person name="Li Y."/>
            <person name="Zhao D."/>
            <person name="Horie T."/>
            <person name="Chen G."/>
            <person name="Bao H."/>
            <person name="Chen S."/>
            <person name="Liu W."/>
            <person name="Horie R."/>
            <person name="Liang T."/>
            <person name="Dong B."/>
            <person name="Feng Q."/>
            <person name="Tao Q."/>
            <person name="Liu X."/>
        </authorList>
    </citation>
    <scope>FUNCTION</scope>
    <scope>MUTAGENESIS OF 68-HIS--GLY-515</scope>
</reference>
<comment type="function">
    <text evidence="3 5 6">Plays a key role in the specification of proneural and promuscular cluster formation (PubMed:8887329, PubMed:9486795). Required for the specification of dorsal and lateral muscle progenitor cells (PubMed:8887329, PubMed:9486795). Regulates development of peripheral nervous system derived from lateral neuroblasts (PubMed:28716930).</text>
</comment>
<comment type="subcellular location">
    <subcellularLocation>
        <location>Nucleus</location>
    </subcellularLocation>
</comment>
<comment type="tissue specificity">
    <text evidence="4 5 6">Dorsal lateral ectoderm, developing central and peripheral nervous systems and the somatic mesoderm. Expressed in dorsal and lateral muscle preclusters and mesodermal fat body precursors.</text>
</comment>
<comment type="developmental stage">
    <text evidence="4 5">Embryo, between 4 hours and larval first instar whereupon expression is greatly reduced. Continued expression only in the CNS up until hatching.</text>
</comment>
<comment type="similarity">
    <text evidence="7">Belongs to the Msh homeobox family.</text>
</comment>
<comment type="sequence caution" evidence="7">
    <conflict type="frameshift">
        <sequence resource="EMBL-CDS" id="CAA59680"/>
    </conflict>
</comment>
<protein>
    <recommendedName>
        <fullName>Muscle segmentation homeobox</fullName>
    </recommendedName>
    <alternativeName>
        <fullName>Protein drop</fullName>
    </alternativeName>
    <alternativeName>
        <fullName>Protein msh</fullName>
    </alternativeName>
</protein>
<proteinExistence type="evidence at protein level"/>
<keyword id="KW-0217">Developmental protein</keyword>
<keyword id="KW-0238">DNA-binding</keyword>
<keyword id="KW-0371">Homeobox</keyword>
<keyword id="KW-0539">Nucleus</keyword>
<keyword id="KW-1185">Reference proteome</keyword>
<sequence length="515" mass="54250">MLKLSPASMTVTGLRQTMTSPTVPPSSNTPAGNLIITSSSSNSGSNSGSNMSSGNMTSSNLTNLSPSHPAGLNALASPTSPSALLLAHQQHLLQQHQQHQQQQQQQQQAAALQLAAVHPPAHHLHKTTSRLSNFSVASLLADTRPRTPPNQAADGPQNLTSSAATSPISQASSTPPPPPASAAAQVPANTFHPAAVAHHAHLLQAAHAAAAAHAQHQAMAAQLRQQQQQADARANSPPASTSSTPSSTPLGSALGSQGNVASTPAKNERHSPLGSHTDSELEYDEEMLQDHEADHDEEEDSIVDIEDMNADDSPRSTPDGLDGSGKSLESPHGPPPGSHMQSTILSPAALASGHVPIRPTPFSALAAAAVAWTGMGGGVPWPGTRQMPPFGPPGMFPGAGFGGDANEPPRIKCNLRKHKPNRKPRTPFTTQQLLSLEKKFREKQYLSIAERAEFSSSLRLTETQVKIWFQNRRAKAKRLQEAEIEKIKMAALGRGAPGAQWAMAGYFHPSLMHLG</sequence>
<organism>
    <name type="scientific">Drosophila melanogaster</name>
    <name type="common">Fruit fly</name>
    <dbReference type="NCBI Taxonomy" id="7227"/>
    <lineage>
        <taxon>Eukaryota</taxon>
        <taxon>Metazoa</taxon>
        <taxon>Ecdysozoa</taxon>
        <taxon>Arthropoda</taxon>
        <taxon>Hexapoda</taxon>
        <taxon>Insecta</taxon>
        <taxon>Pterygota</taxon>
        <taxon>Neoptera</taxon>
        <taxon>Endopterygota</taxon>
        <taxon>Diptera</taxon>
        <taxon>Brachycera</taxon>
        <taxon>Muscomorpha</taxon>
        <taxon>Ephydroidea</taxon>
        <taxon>Drosophilidae</taxon>
        <taxon>Drosophila</taxon>
        <taxon>Sophophora</taxon>
    </lineage>
</organism>
<accession>Q03372</accession>
<accession>Q24481</accession>
<accession>Q8T0H1</accession>
<accession>Q9VAK4</accession>
<evidence type="ECO:0000255" key="1">
    <source>
        <dbReference type="PROSITE-ProRule" id="PRU00108"/>
    </source>
</evidence>
<evidence type="ECO:0000256" key="2">
    <source>
        <dbReference type="SAM" id="MobiDB-lite"/>
    </source>
</evidence>
<evidence type="ECO:0000269" key="3">
    <source>
    </source>
</evidence>
<evidence type="ECO:0000269" key="4">
    <source>
    </source>
</evidence>
<evidence type="ECO:0000269" key="5">
    <source>
    </source>
</evidence>
<evidence type="ECO:0000269" key="6">
    <source>
    </source>
</evidence>
<evidence type="ECO:0000305" key="7"/>
<name>HMSH_DROME</name>